<evidence type="ECO:0000255" key="1">
    <source>
        <dbReference type="HAMAP-Rule" id="MF_01401"/>
    </source>
</evidence>
<reference key="1">
    <citation type="journal article" date="2006" name="Proc. Natl. Acad. Sci. U.S.A.">
        <title>Comparative genomics of the lactic acid bacteria.</title>
        <authorList>
            <person name="Makarova K.S."/>
            <person name="Slesarev A."/>
            <person name="Wolf Y.I."/>
            <person name="Sorokin A."/>
            <person name="Mirkin B."/>
            <person name="Koonin E.V."/>
            <person name="Pavlov A."/>
            <person name="Pavlova N."/>
            <person name="Karamychev V."/>
            <person name="Polouchine N."/>
            <person name="Shakhova V."/>
            <person name="Grigoriev I."/>
            <person name="Lou Y."/>
            <person name="Rohksar D."/>
            <person name="Lucas S."/>
            <person name="Huang K."/>
            <person name="Goodstein D.M."/>
            <person name="Hawkins T."/>
            <person name="Plengvidhya V."/>
            <person name="Welker D."/>
            <person name="Hughes J."/>
            <person name="Goh Y."/>
            <person name="Benson A."/>
            <person name="Baldwin K."/>
            <person name="Lee J.-H."/>
            <person name="Diaz-Muniz I."/>
            <person name="Dosti B."/>
            <person name="Smeianov V."/>
            <person name="Wechter W."/>
            <person name="Barabote R."/>
            <person name="Lorca G."/>
            <person name="Altermann E."/>
            <person name="Barrangou R."/>
            <person name="Ganesan B."/>
            <person name="Xie Y."/>
            <person name="Rawsthorne H."/>
            <person name="Tamir D."/>
            <person name="Parker C."/>
            <person name="Breidt F."/>
            <person name="Broadbent J.R."/>
            <person name="Hutkins R."/>
            <person name="O'Sullivan D."/>
            <person name="Steele J."/>
            <person name="Unlu G."/>
            <person name="Saier M.H. Jr."/>
            <person name="Klaenhammer T."/>
            <person name="Richardson P."/>
            <person name="Kozyavkin S."/>
            <person name="Weimer B.C."/>
            <person name="Mills D.A."/>
        </authorList>
    </citation>
    <scope>NUCLEOTIDE SEQUENCE [LARGE SCALE GENOMIC DNA]</scope>
    <source>
        <strain>ATCC 8293 / DSM 20343 / BCRC 11652 / CCM 1803 / JCM 6124 / NCDO 523 / NBRC 100496 / NCIMB 8023 / NCTC 12954 / NRRL B-1118 / 37Y</strain>
    </source>
</reference>
<accession>Q03W54</accession>
<gene>
    <name evidence="1" type="primary">msrA</name>
    <name type="ordered locus">LEUM_1476</name>
</gene>
<sequence length="171" mass="19875">MAIETAIFAGGCFWCMVQPFDSLDGIEKVRSGYTGGHVENPTYEQVLTHTTGHTEAVKIWFDSEKISYRELVEIYWEQTDPTDAMGQFQDRGDNYRPVIFVNSPEQREIAEESRAALAASNRFDEPIVTKIEDAKPFYEAEEYHQDFYKKDPEREALEMAQRLQFKADKWN</sequence>
<comment type="function">
    <text evidence="1">Has an important function as a repair enzyme for proteins that have been inactivated by oxidation. Catalyzes the reversible oxidation-reduction of methionine sulfoxide in proteins to methionine.</text>
</comment>
<comment type="catalytic activity">
    <reaction evidence="1">
        <text>L-methionyl-[protein] + [thioredoxin]-disulfide + H2O = L-methionyl-(S)-S-oxide-[protein] + [thioredoxin]-dithiol</text>
        <dbReference type="Rhea" id="RHEA:14217"/>
        <dbReference type="Rhea" id="RHEA-COMP:10698"/>
        <dbReference type="Rhea" id="RHEA-COMP:10700"/>
        <dbReference type="Rhea" id="RHEA-COMP:12313"/>
        <dbReference type="Rhea" id="RHEA-COMP:12315"/>
        <dbReference type="ChEBI" id="CHEBI:15377"/>
        <dbReference type="ChEBI" id="CHEBI:16044"/>
        <dbReference type="ChEBI" id="CHEBI:29950"/>
        <dbReference type="ChEBI" id="CHEBI:44120"/>
        <dbReference type="ChEBI" id="CHEBI:50058"/>
        <dbReference type="EC" id="1.8.4.11"/>
    </reaction>
</comment>
<comment type="catalytic activity">
    <reaction evidence="1">
        <text>[thioredoxin]-disulfide + L-methionine + H2O = L-methionine (S)-S-oxide + [thioredoxin]-dithiol</text>
        <dbReference type="Rhea" id="RHEA:19993"/>
        <dbReference type="Rhea" id="RHEA-COMP:10698"/>
        <dbReference type="Rhea" id="RHEA-COMP:10700"/>
        <dbReference type="ChEBI" id="CHEBI:15377"/>
        <dbReference type="ChEBI" id="CHEBI:29950"/>
        <dbReference type="ChEBI" id="CHEBI:50058"/>
        <dbReference type="ChEBI" id="CHEBI:57844"/>
        <dbReference type="ChEBI" id="CHEBI:58772"/>
        <dbReference type="EC" id="1.8.4.11"/>
    </reaction>
</comment>
<comment type="similarity">
    <text evidence="1">Belongs to the MsrA Met sulfoxide reductase family.</text>
</comment>
<proteinExistence type="inferred from homology"/>
<protein>
    <recommendedName>
        <fullName evidence="1">Peptide methionine sulfoxide reductase MsrA</fullName>
        <shortName evidence="1">Protein-methionine-S-oxide reductase</shortName>
        <ecNumber evidence="1">1.8.4.11</ecNumber>
    </recommendedName>
    <alternativeName>
        <fullName evidence="1">Peptide-methionine (S)-S-oxide reductase</fullName>
        <shortName evidence="1">Peptide Met(O) reductase</shortName>
    </alternativeName>
</protein>
<dbReference type="EC" id="1.8.4.11" evidence="1"/>
<dbReference type="EMBL" id="CP000414">
    <property type="protein sequence ID" value="ABJ62568.1"/>
    <property type="molecule type" value="Genomic_DNA"/>
</dbReference>
<dbReference type="RefSeq" id="WP_002815174.1">
    <property type="nucleotide sequence ID" value="NC_008531.1"/>
</dbReference>
<dbReference type="SMR" id="Q03W54"/>
<dbReference type="EnsemblBacteria" id="ABJ62568">
    <property type="protein sequence ID" value="ABJ62568"/>
    <property type="gene ID" value="LEUM_1476"/>
</dbReference>
<dbReference type="GeneID" id="29576956"/>
<dbReference type="KEGG" id="lme:LEUM_1476"/>
<dbReference type="eggNOG" id="COG0225">
    <property type="taxonomic scope" value="Bacteria"/>
</dbReference>
<dbReference type="HOGENOM" id="CLU_031040_10_1_9"/>
<dbReference type="Proteomes" id="UP000000362">
    <property type="component" value="Chromosome"/>
</dbReference>
<dbReference type="GO" id="GO:0033744">
    <property type="term" value="F:L-methionine:thioredoxin-disulfide S-oxidoreductase activity"/>
    <property type="evidence" value="ECO:0007669"/>
    <property type="project" value="RHEA"/>
</dbReference>
<dbReference type="GO" id="GO:0008113">
    <property type="term" value="F:peptide-methionine (S)-S-oxide reductase activity"/>
    <property type="evidence" value="ECO:0007669"/>
    <property type="project" value="UniProtKB-UniRule"/>
</dbReference>
<dbReference type="GO" id="GO:0036211">
    <property type="term" value="P:protein modification process"/>
    <property type="evidence" value="ECO:0007669"/>
    <property type="project" value="UniProtKB-UniRule"/>
</dbReference>
<dbReference type="Gene3D" id="3.30.1060.10">
    <property type="entry name" value="Peptide methionine sulphoxide reductase MsrA"/>
    <property type="match status" value="1"/>
</dbReference>
<dbReference type="HAMAP" id="MF_01401">
    <property type="entry name" value="MsrA"/>
    <property type="match status" value="1"/>
</dbReference>
<dbReference type="InterPro" id="IPR002569">
    <property type="entry name" value="Met_Sox_Rdtase_MsrA_dom"/>
</dbReference>
<dbReference type="InterPro" id="IPR036509">
    <property type="entry name" value="Met_Sox_Rdtase_MsrA_sf"/>
</dbReference>
<dbReference type="NCBIfam" id="TIGR00401">
    <property type="entry name" value="msrA"/>
    <property type="match status" value="1"/>
</dbReference>
<dbReference type="PANTHER" id="PTHR43774">
    <property type="entry name" value="PEPTIDE METHIONINE SULFOXIDE REDUCTASE"/>
    <property type="match status" value="1"/>
</dbReference>
<dbReference type="PANTHER" id="PTHR43774:SF1">
    <property type="entry name" value="PEPTIDE METHIONINE SULFOXIDE REDUCTASE MSRA 2"/>
    <property type="match status" value="1"/>
</dbReference>
<dbReference type="Pfam" id="PF01625">
    <property type="entry name" value="PMSR"/>
    <property type="match status" value="1"/>
</dbReference>
<dbReference type="SUPFAM" id="SSF55068">
    <property type="entry name" value="Peptide methionine sulfoxide reductase"/>
    <property type="match status" value="1"/>
</dbReference>
<feature type="chain" id="PRO_1000068336" description="Peptide methionine sulfoxide reductase MsrA">
    <location>
        <begin position="1"/>
        <end position="171"/>
    </location>
</feature>
<feature type="active site" evidence="1">
    <location>
        <position position="12"/>
    </location>
</feature>
<keyword id="KW-0560">Oxidoreductase</keyword>
<keyword id="KW-1185">Reference proteome</keyword>
<name>MSRA_LEUMM</name>
<organism>
    <name type="scientific">Leuconostoc mesenteroides subsp. mesenteroides (strain ATCC 8293 / DSM 20343 / BCRC 11652 / CCM 1803 / JCM 6124 / NCDO 523 / NBRC 100496 / NCIMB 8023 / NCTC 12954 / NRRL B-1118 / 37Y)</name>
    <dbReference type="NCBI Taxonomy" id="203120"/>
    <lineage>
        <taxon>Bacteria</taxon>
        <taxon>Bacillati</taxon>
        <taxon>Bacillota</taxon>
        <taxon>Bacilli</taxon>
        <taxon>Lactobacillales</taxon>
        <taxon>Lactobacillaceae</taxon>
        <taxon>Leuconostoc</taxon>
    </lineage>
</organism>